<sequence>MTTNIVLETTMGSLILELYTTHAPKTCNNFTTLVRRGYYDNTIFHRIIPNFMVQGGDPTGTGRGGSSIFGEKFEDEIDPGLKHTGAGILSMANAGPNTNGSQFFVTLAPTPWLDGKHTIFGRVKSGMGTIKRMGLVKTGSEDRPVEEVKIVKARVVEEEEQI</sequence>
<feature type="chain" id="PRO_0000232966" description="Peptidyl-prolyl cis-trans isomerase-like 1">
    <location>
        <begin position="1"/>
        <end position="162"/>
    </location>
</feature>
<feature type="domain" description="PPIase cyclophilin-type" evidence="2">
    <location>
        <begin position="1"/>
        <end position="155"/>
    </location>
</feature>
<protein>
    <recommendedName>
        <fullName>Peptidyl-prolyl cis-trans isomerase-like 1</fullName>
        <shortName>PPIase</shortName>
        <ecNumber>5.2.1.8</ecNumber>
    </recommendedName>
    <alternativeName>
        <fullName>Rotamase</fullName>
    </alternativeName>
</protein>
<reference key="1">
    <citation type="journal article" date="2007" name="Science">
        <title>The Fusarium graminearum genome reveals a link between localized polymorphism and pathogen specialization.</title>
        <authorList>
            <person name="Cuomo C.A."/>
            <person name="Gueldener U."/>
            <person name="Xu J.-R."/>
            <person name="Trail F."/>
            <person name="Turgeon B.G."/>
            <person name="Di Pietro A."/>
            <person name="Walton J.D."/>
            <person name="Ma L.-J."/>
            <person name="Baker S.E."/>
            <person name="Rep M."/>
            <person name="Adam G."/>
            <person name="Antoniw J."/>
            <person name="Baldwin T."/>
            <person name="Calvo S.E."/>
            <person name="Chang Y.-L."/>
            <person name="DeCaprio D."/>
            <person name="Gale L.R."/>
            <person name="Gnerre S."/>
            <person name="Goswami R.S."/>
            <person name="Hammond-Kosack K."/>
            <person name="Harris L.J."/>
            <person name="Hilburn K."/>
            <person name="Kennell J.C."/>
            <person name="Kroken S."/>
            <person name="Magnuson J.K."/>
            <person name="Mannhaupt G."/>
            <person name="Mauceli E.W."/>
            <person name="Mewes H.-W."/>
            <person name="Mitterbauer R."/>
            <person name="Muehlbauer G."/>
            <person name="Muensterkoetter M."/>
            <person name="Nelson D."/>
            <person name="O'Donnell K."/>
            <person name="Ouellet T."/>
            <person name="Qi W."/>
            <person name="Quesneville H."/>
            <person name="Roncero M.I.G."/>
            <person name="Seong K.-Y."/>
            <person name="Tetko I.V."/>
            <person name="Urban M."/>
            <person name="Waalwijk C."/>
            <person name="Ward T.J."/>
            <person name="Yao J."/>
            <person name="Birren B.W."/>
            <person name="Kistler H.C."/>
        </authorList>
    </citation>
    <scope>NUCLEOTIDE SEQUENCE [LARGE SCALE GENOMIC DNA]</scope>
    <source>
        <strain>ATCC MYA-4620 / CBS 123657 / FGSC 9075 / NRRL 31084 / PH-1</strain>
    </source>
</reference>
<reference key="2">
    <citation type="journal article" date="2010" name="Nature">
        <title>Comparative genomics reveals mobile pathogenicity chromosomes in Fusarium.</title>
        <authorList>
            <person name="Ma L.-J."/>
            <person name="van der Does H.C."/>
            <person name="Borkovich K.A."/>
            <person name="Coleman J.J."/>
            <person name="Daboussi M.-J."/>
            <person name="Di Pietro A."/>
            <person name="Dufresne M."/>
            <person name="Freitag M."/>
            <person name="Grabherr M."/>
            <person name="Henrissat B."/>
            <person name="Houterman P.M."/>
            <person name="Kang S."/>
            <person name="Shim W.-B."/>
            <person name="Woloshuk C."/>
            <person name="Xie X."/>
            <person name="Xu J.-R."/>
            <person name="Antoniw J."/>
            <person name="Baker S.E."/>
            <person name="Bluhm B.H."/>
            <person name="Breakspear A."/>
            <person name="Brown D.W."/>
            <person name="Butchko R.A.E."/>
            <person name="Chapman S."/>
            <person name="Coulson R."/>
            <person name="Coutinho P.M."/>
            <person name="Danchin E.G.J."/>
            <person name="Diener A."/>
            <person name="Gale L.R."/>
            <person name="Gardiner D.M."/>
            <person name="Goff S."/>
            <person name="Hammond-Kosack K.E."/>
            <person name="Hilburn K."/>
            <person name="Hua-Van A."/>
            <person name="Jonkers W."/>
            <person name="Kazan K."/>
            <person name="Kodira C.D."/>
            <person name="Koehrsen M."/>
            <person name="Kumar L."/>
            <person name="Lee Y.-H."/>
            <person name="Li L."/>
            <person name="Manners J.M."/>
            <person name="Miranda-Saavedra D."/>
            <person name="Mukherjee M."/>
            <person name="Park G."/>
            <person name="Park J."/>
            <person name="Park S.-Y."/>
            <person name="Proctor R.H."/>
            <person name="Regev A."/>
            <person name="Ruiz-Roldan M.C."/>
            <person name="Sain D."/>
            <person name="Sakthikumar S."/>
            <person name="Sykes S."/>
            <person name="Schwartz D.C."/>
            <person name="Turgeon B.G."/>
            <person name="Wapinski I."/>
            <person name="Yoder O."/>
            <person name="Young S."/>
            <person name="Zeng Q."/>
            <person name="Zhou S."/>
            <person name="Galagan J."/>
            <person name="Cuomo C.A."/>
            <person name="Kistler H.C."/>
            <person name="Rep M."/>
        </authorList>
    </citation>
    <scope>GENOME REANNOTATION</scope>
    <source>
        <strain>ATCC MYA-4620 / CBS 123657 / FGSC 9075 / NRRL 31084 / PH-1</strain>
    </source>
</reference>
<reference key="3">
    <citation type="journal article" date="2015" name="BMC Genomics">
        <title>The completed genome sequence of the pathogenic ascomycete fungus Fusarium graminearum.</title>
        <authorList>
            <person name="King R."/>
            <person name="Urban M."/>
            <person name="Hammond-Kosack M.C.U."/>
            <person name="Hassani-Pak K."/>
            <person name="Hammond-Kosack K.E."/>
        </authorList>
    </citation>
    <scope>NUCLEOTIDE SEQUENCE [LARGE SCALE GENOMIC DNA]</scope>
    <source>
        <strain>ATCC MYA-4620 / CBS 123657 / FGSC 9075 / NRRL 31084 / PH-1</strain>
    </source>
</reference>
<name>PPIL1_GIBZE</name>
<proteinExistence type="inferred from homology"/>
<keyword id="KW-0413">Isomerase</keyword>
<keyword id="KW-1185">Reference proteome</keyword>
<keyword id="KW-0697">Rotamase</keyword>
<evidence type="ECO:0000250" key="1"/>
<evidence type="ECO:0000255" key="2">
    <source>
        <dbReference type="PROSITE-ProRule" id="PRU00156"/>
    </source>
</evidence>
<evidence type="ECO:0000305" key="3"/>
<organism>
    <name type="scientific">Gibberella zeae (strain ATCC MYA-4620 / CBS 123657 / FGSC 9075 / NRRL 31084 / PH-1)</name>
    <name type="common">Wheat head blight fungus</name>
    <name type="synonym">Fusarium graminearum</name>
    <dbReference type="NCBI Taxonomy" id="229533"/>
    <lineage>
        <taxon>Eukaryota</taxon>
        <taxon>Fungi</taxon>
        <taxon>Dikarya</taxon>
        <taxon>Ascomycota</taxon>
        <taxon>Pezizomycotina</taxon>
        <taxon>Sordariomycetes</taxon>
        <taxon>Hypocreomycetidae</taxon>
        <taxon>Hypocreales</taxon>
        <taxon>Nectriaceae</taxon>
        <taxon>Fusarium</taxon>
    </lineage>
</organism>
<comment type="function">
    <text evidence="1">PPIases accelerate the folding of proteins. It catalyzes the cis-trans isomerization of proline imidic peptide bonds in oligopeptides (By similarity).</text>
</comment>
<comment type="catalytic activity">
    <reaction>
        <text>[protein]-peptidylproline (omega=180) = [protein]-peptidylproline (omega=0)</text>
        <dbReference type="Rhea" id="RHEA:16237"/>
        <dbReference type="Rhea" id="RHEA-COMP:10747"/>
        <dbReference type="Rhea" id="RHEA-COMP:10748"/>
        <dbReference type="ChEBI" id="CHEBI:83833"/>
        <dbReference type="ChEBI" id="CHEBI:83834"/>
        <dbReference type="EC" id="5.2.1.8"/>
    </reaction>
</comment>
<comment type="similarity">
    <text evidence="3">Belongs to the cyclophilin-type PPIase family. PPIL1 subfamily.</text>
</comment>
<gene>
    <name type="primary">CYP1</name>
    <name type="ORF">FGRAMPH1_01T10797</name>
    <name type="ORF">FGRRES_08777_M</name>
    <name type="ORF">FGSG_08777</name>
</gene>
<accession>Q4I1Y1</accession>
<accession>A0A098DGX2</accession>
<accession>A0A0E0S126</accession>
<accession>A0A1C3YMI8</accession>
<accession>V6RJ94</accession>
<dbReference type="EC" id="5.2.1.8"/>
<dbReference type="EMBL" id="DS231667">
    <property type="protein sequence ID" value="ESU14521.1"/>
    <property type="molecule type" value="Genomic_DNA"/>
</dbReference>
<dbReference type="EMBL" id="HG970333">
    <property type="protein sequence ID" value="SCB65663.1"/>
    <property type="molecule type" value="Genomic_DNA"/>
</dbReference>
<dbReference type="RefSeq" id="XP_011319946.1">
    <property type="nucleotide sequence ID" value="XM_011321644.1"/>
</dbReference>
<dbReference type="SMR" id="Q4I1Y1"/>
<dbReference type="STRING" id="229533.Q4I1Y1"/>
<dbReference type="GeneID" id="23555764"/>
<dbReference type="KEGG" id="fgr:FGSG_08777"/>
<dbReference type="VEuPathDB" id="FungiDB:FGRAMPH1_01G10797"/>
<dbReference type="eggNOG" id="KOG0881">
    <property type="taxonomic scope" value="Eukaryota"/>
</dbReference>
<dbReference type="HOGENOM" id="CLU_012062_16_3_1"/>
<dbReference type="InParanoid" id="Q4I1Y1"/>
<dbReference type="OrthoDB" id="103848at110618"/>
<dbReference type="Proteomes" id="UP000070720">
    <property type="component" value="Chromosome 2"/>
</dbReference>
<dbReference type="GO" id="GO:0071013">
    <property type="term" value="C:catalytic step 2 spliceosome"/>
    <property type="evidence" value="ECO:0007669"/>
    <property type="project" value="TreeGrafter"/>
</dbReference>
<dbReference type="GO" id="GO:0003755">
    <property type="term" value="F:peptidyl-prolyl cis-trans isomerase activity"/>
    <property type="evidence" value="ECO:0007669"/>
    <property type="project" value="UniProtKB-KW"/>
</dbReference>
<dbReference type="GO" id="GO:0006457">
    <property type="term" value="P:protein folding"/>
    <property type="evidence" value="ECO:0007669"/>
    <property type="project" value="InterPro"/>
</dbReference>
<dbReference type="FunFam" id="2.40.100.10:FF:000008">
    <property type="entry name" value="Peptidyl-prolyl cis-trans isomerase"/>
    <property type="match status" value="1"/>
</dbReference>
<dbReference type="Gene3D" id="2.40.100.10">
    <property type="entry name" value="Cyclophilin-like"/>
    <property type="match status" value="1"/>
</dbReference>
<dbReference type="InterPro" id="IPR029000">
    <property type="entry name" value="Cyclophilin-like_dom_sf"/>
</dbReference>
<dbReference type="InterPro" id="IPR024936">
    <property type="entry name" value="Cyclophilin-type_PPIase"/>
</dbReference>
<dbReference type="InterPro" id="IPR020892">
    <property type="entry name" value="Cyclophilin-type_PPIase_CS"/>
</dbReference>
<dbReference type="InterPro" id="IPR002130">
    <property type="entry name" value="Cyclophilin-type_PPIase_dom"/>
</dbReference>
<dbReference type="InterPro" id="IPR044666">
    <property type="entry name" value="Cyclophilin_A-like"/>
</dbReference>
<dbReference type="PANTHER" id="PTHR45625">
    <property type="entry name" value="PEPTIDYL-PROLYL CIS-TRANS ISOMERASE-RELATED"/>
    <property type="match status" value="1"/>
</dbReference>
<dbReference type="PANTHER" id="PTHR45625:SF4">
    <property type="entry name" value="PEPTIDYLPROLYL ISOMERASE DOMAIN AND WD REPEAT-CONTAINING PROTEIN 1"/>
    <property type="match status" value="1"/>
</dbReference>
<dbReference type="Pfam" id="PF00160">
    <property type="entry name" value="Pro_isomerase"/>
    <property type="match status" value="1"/>
</dbReference>
<dbReference type="PIRSF" id="PIRSF001467">
    <property type="entry name" value="Peptidylpro_ismrse"/>
    <property type="match status" value="1"/>
</dbReference>
<dbReference type="PRINTS" id="PR00153">
    <property type="entry name" value="CSAPPISMRASE"/>
</dbReference>
<dbReference type="SUPFAM" id="SSF50891">
    <property type="entry name" value="Cyclophilin-like"/>
    <property type="match status" value="1"/>
</dbReference>
<dbReference type="PROSITE" id="PS00170">
    <property type="entry name" value="CSA_PPIASE_1"/>
    <property type="match status" value="1"/>
</dbReference>
<dbReference type="PROSITE" id="PS50072">
    <property type="entry name" value="CSA_PPIASE_2"/>
    <property type="match status" value="1"/>
</dbReference>